<proteinExistence type="inferred from homology"/>
<reference key="1">
    <citation type="journal article" date="2005" name="Science">
        <title>The genome of the basidiomycetous yeast and human pathogen Cryptococcus neoformans.</title>
        <authorList>
            <person name="Loftus B.J."/>
            <person name="Fung E."/>
            <person name="Roncaglia P."/>
            <person name="Rowley D."/>
            <person name="Amedeo P."/>
            <person name="Bruno D."/>
            <person name="Vamathevan J."/>
            <person name="Miranda M."/>
            <person name="Anderson I.J."/>
            <person name="Fraser J.A."/>
            <person name="Allen J.E."/>
            <person name="Bosdet I.E."/>
            <person name="Brent M.R."/>
            <person name="Chiu R."/>
            <person name="Doering T.L."/>
            <person name="Donlin M.J."/>
            <person name="D'Souza C.A."/>
            <person name="Fox D.S."/>
            <person name="Grinberg V."/>
            <person name="Fu J."/>
            <person name="Fukushima M."/>
            <person name="Haas B.J."/>
            <person name="Huang J.C."/>
            <person name="Janbon G."/>
            <person name="Jones S.J.M."/>
            <person name="Koo H.L."/>
            <person name="Krzywinski M.I."/>
            <person name="Kwon-Chung K.J."/>
            <person name="Lengeler K.B."/>
            <person name="Maiti R."/>
            <person name="Marra M.A."/>
            <person name="Marra R.E."/>
            <person name="Mathewson C.A."/>
            <person name="Mitchell T.G."/>
            <person name="Pertea M."/>
            <person name="Riggs F.R."/>
            <person name="Salzberg S.L."/>
            <person name="Schein J.E."/>
            <person name="Shvartsbeyn A."/>
            <person name="Shin H."/>
            <person name="Shumway M."/>
            <person name="Specht C.A."/>
            <person name="Suh B.B."/>
            <person name="Tenney A."/>
            <person name="Utterback T.R."/>
            <person name="Wickes B.L."/>
            <person name="Wortman J.R."/>
            <person name="Wye N.H."/>
            <person name="Kronstad J.W."/>
            <person name="Lodge J.K."/>
            <person name="Heitman J."/>
            <person name="Davis R.W."/>
            <person name="Fraser C.M."/>
            <person name="Hyman R.W."/>
        </authorList>
    </citation>
    <scope>NUCLEOTIDE SEQUENCE [LARGE SCALE GENOMIC DNA]</scope>
    <source>
        <strain>JEC21 / ATCC MYA-565</strain>
    </source>
</reference>
<sequence>MDQDGFHSIAWDDAPSSNPPLSAPSPSQSPFEEGFESISPSSAQPPASDQYEGYDNSKAGEAGDVGVTLDRRERLGGHEVDGSVWNGKWMDVQVREPAKEHEGSKDMYVSYAVKTETSLPTFRKPLTVVRRRFQDFVFLREHLVKNFPACVVPPIPDKHRLEYIKGDRFSPEFVERRRLDLQRFADRIARHPVLQRSQLVNDFLQSTEWSVAKHHHISHPPPESHASLIDSLSDTFINAFSRVRKPDARFVEMTEELERFEEGLTGVERVVGRGKSRVDDLAADYQDMAAAYQGLGYLESGITEPLNRFAEKMLDFSTLLKHMNNTTIEPFLSSSHSLLSYSATHRNVIKLRDQKQLDFEELSAYLSAIVSERDRLAALSSGHTAAPVGLGTYLRDQMDKLRGTDDIHTRRERMRKMDGKIKELQDAVTLAHETSNAFSEEVIKEHAYFELEKKQEMKDALQAYTDGQVEMLQQAMDDWDRIIPLLQRIRVDV</sequence>
<feature type="chain" id="PRO_0000213810" description="Sorting nexin-4">
    <location>
        <begin position="1"/>
        <end position="493"/>
    </location>
</feature>
<feature type="domain" description="PX" evidence="5">
    <location>
        <begin position="89"/>
        <end position="211"/>
    </location>
</feature>
<feature type="region of interest" description="Disordered" evidence="6">
    <location>
        <begin position="1"/>
        <end position="67"/>
    </location>
</feature>
<feature type="compositionally biased region" description="Low complexity" evidence="6">
    <location>
        <begin position="37"/>
        <end position="48"/>
    </location>
</feature>
<feature type="binding site" evidence="2">
    <location>
        <position position="132"/>
    </location>
    <ligand>
        <name>a 1,2-diacyl-sn-glycero-3-phospho-(1D-myo-inositol-3-phosphate)</name>
        <dbReference type="ChEBI" id="CHEBI:58088"/>
    </ligand>
</feature>
<feature type="binding site" evidence="4">
    <location>
        <position position="158"/>
    </location>
    <ligand>
        <name>a 1,2-diacyl-sn-glycero-3-phospho-(1D-myo-inositol-3-phosphate)</name>
        <dbReference type="ChEBI" id="CHEBI:58088"/>
    </ligand>
</feature>
<feature type="binding site" evidence="3">
    <location>
        <position position="177"/>
    </location>
    <ligand>
        <name>a 1,2-diacyl-sn-glycero-3-phospho-(1D-myo-inositol-3-phosphate)</name>
        <dbReference type="ChEBI" id="CHEBI:58088"/>
    </ligand>
</feature>
<comment type="function">
    <text evidence="1">Sorting nexin, involved in the separation or division of vacuoles throughout the entire life cycle of the cells. Involved in retrieval of late-Golgi SNAREs from post-Golgi endosomes to the trans-Golgi network, for cytoplasm to vacuole transport (Cvt), and autophagy of large cargos including mitophagy, pexophagy and glycophagy.</text>
</comment>
<comment type="subcellular location">
    <subcellularLocation>
        <location evidence="1">Cytoplasm</location>
        <location evidence="1">Cytosol</location>
    </subcellularLocation>
    <subcellularLocation>
        <location evidence="1">Preautophagosomal structure membrane</location>
        <topology evidence="1">Peripheral membrane protein</topology>
    </subcellularLocation>
    <subcellularLocation>
        <location evidence="1">Endosome membrane</location>
        <topology evidence="1">Peripheral membrane protein</topology>
    </subcellularLocation>
    <text evidence="1">Endosome and other perivacuolar punctate structures. Associates to phosphatidylinositol 3-phosphate, necessary for peripheral membrane localization to the perivacuolar punctate structures.</text>
</comment>
<comment type="domain">
    <text evidence="4">The PX domain binds phosphatidylinositol 3-phosphate which is necessary for peripheral membrane localization to the perivacuolar punctate structures.</text>
</comment>
<comment type="similarity">
    <text evidence="7">Belongs to the sorting nexin family.</text>
</comment>
<evidence type="ECO:0000250" key="1">
    <source>
        <dbReference type="UniProtKB" id="P47057"/>
    </source>
</evidence>
<evidence type="ECO:0000250" key="2">
    <source>
        <dbReference type="UniProtKB" id="Q3UR97"/>
    </source>
</evidence>
<evidence type="ECO:0000250" key="3">
    <source>
        <dbReference type="UniProtKB" id="Q6P4T1"/>
    </source>
</evidence>
<evidence type="ECO:0000250" key="4">
    <source>
        <dbReference type="UniProtKB" id="Q96L94"/>
    </source>
</evidence>
<evidence type="ECO:0000255" key="5">
    <source>
        <dbReference type="PROSITE-ProRule" id="PRU00147"/>
    </source>
</evidence>
<evidence type="ECO:0000256" key="6">
    <source>
        <dbReference type="SAM" id="MobiDB-lite"/>
    </source>
</evidence>
<evidence type="ECO:0000305" key="7"/>
<name>SNX4_CRYNJ</name>
<accession>P0CR62</accession>
<accession>Q55WP9</accession>
<accession>Q5KJJ8</accession>
<keyword id="KW-0072">Autophagy</keyword>
<keyword id="KW-0963">Cytoplasm</keyword>
<keyword id="KW-0967">Endosome</keyword>
<keyword id="KW-0446">Lipid-binding</keyword>
<keyword id="KW-0472">Membrane</keyword>
<keyword id="KW-0653">Protein transport</keyword>
<keyword id="KW-1185">Reference proteome</keyword>
<keyword id="KW-0813">Transport</keyword>
<organism>
    <name type="scientific">Cryptococcus neoformans var. neoformans serotype D (strain JEC21 / ATCC MYA-565)</name>
    <name type="common">Filobasidiella neoformans</name>
    <dbReference type="NCBI Taxonomy" id="214684"/>
    <lineage>
        <taxon>Eukaryota</taxon>
        <taxon>Fungi</taxon>
        <taxon>Dikarya</taxon>
        <taxon>Basidiomycota</taxon>
        <taxon>Agaricomycotina</taxon>
        <taxon>Tremellomycetes</taxon>
        <taxon>Tremellales</taxon>
        <taxon>Cryptococcaceae</taxon>
        <taxon>Cryptococcus</taxon>
        <taxon>Cryptococcus neoformans species complex</taxon>
    </lineage>
</organism>
<protein>
    <recommendedName>
        <fullName>Sorting nexin-4</fullName>
    </recommendedName>
    <alternativeName>
        <fullName>Autophagy-related protein 24</fullName>
    </alternativeName>
</protein>
<dbReference type="EMBL" id="AE017343">
    <property type="protein sequence ID" value="AAW42581.1"/>
    <property type="molecule type" value="Genomic_DNA"/>
</dbReference>
<dbReference type="RefSeq" id="XP_569888.1">
    <property type="nucleotide sequence ID" value="XM_569888.1"/>
</dbReference>
<dbReference type="SMR" id="P0CR62"/>
<dbReference type="FunCoup" id="P0CR62">
    <property type="interactions" value="164"/>
</dbReference>
<dbReference type="STRING" id="214684.P0CR62"/>
<dbReference type="PaxDb" id="214684-P0CR62"/>
<dbReference type="EnsemblFungi" id="AAW42581">
    <property type="protein sequence ID" value="AAW42581"/>
    <property type="gene ID" value="CNC06300"/>
</dbReference>
<dbReference type="GeneID" id="3256770"/>
<dbReference type="KEGG" id="cne:CNC06300"/>
<dbReference type="VEuPathDB" id="FungiDB:CNC06300"/>
<dbReference type="eggNOG" id="KOG2273">
    <property type="taxonomic scope" value="Eukaryota"/>
</dbReference>
<dbReference type="HOGENOM" id="CLU_027221_0_0_1"/>
<dbReference type="InParanoid" id="P0CR62"/>
<dbReference type="OMA" id="WSLHRFI"/>
<dbReference type="OrthoDB" id="205639at2759"/>
<dbReference type="Proteomes" id="UP000002149">
    <property type="component" value="Chromosome 3"/>
</dbReference>
<dbReference type="GO" id="GO:0005829">
    <property type="term" value="C:cytosol"/>
    <property type="evidence" value="ECO:0007669"/>
    <property type="project" value="UniProtKB-SubCell"/>
</dbReference>
<dbReference type="GO" id="GO:0005769">
    <property type="term" value="C:early endosome"/>
    <property type="evidence" value="ECO:0000318"/>
    <property type="project" value="GO_Central"/>
</dbReference>
<dbReference type="GO" id="GO:0010008">
    <property type="term" value="C:endosome membrane"/>
    <property type="evidence" value="ECO:0007669"/>
    <property type="project" value="UniProtKB-SubCell"/>
</dbReference>
<dbReference type="GO" id="GO:0000407">
    <property type="term" value="C:phagophore assembly site"/>
    <property type="evidence" value="ECO:0000318"/>
    <property type="project" value="GO_Central"/>
</dbReference>
<dbReference type="GO" id="GO:0034045">
    <property type="term" value="C:phagophore assembly site membrane"/>
    <property type="evidence" value="ECO:0007669"/>
    <property type="project" value="UniProtKB-SubCell"/>
</dbReference>
<dbReference type="GO" id="GO:0035091">
    <property type="term" value="F:phosphatidylinositol binding"/>
    <property type="evidence" value="ECO:0007669"/>
    <property type="project" value="InterPro"/>
</dbReference>
<dbReference type="GO" id="GO:0032456">
    <property type="term" value="P:endocytic recycling"/>
    <property type="evidence" value="ECO:0000318"/>
    <property type="project" value="GO_Central"/>
</dbReference>
<dbReference type="GO" id="GO:0000423">
    <property type="term" value="P:mitophagy"/>
    <property type="evidence" value="ECO:0000318"/>
    <property type="project" value="GO_Central"/>
</dbReference>
<dbReference type="GO" id="GO:0034727">
    <property type="term" value="P:piecemeal microautophagy of the nucleus"/>
    <property type="evidence" value="ECO:0000318"/>
    <property type="project" value="GO_Central"/>
</dbReference>
<dbReference type="GO" id="GO:0015031">
    <property type="term" value="P:protein transport"/>
    <property type="evidence" value="ECO:0000318"/>
    <property type="project" value="GO_Central"/>
</dbReference>
<dbReference type="GO" id="GO:0061709">
    <property type="term" value="P:reticulophagy"/>
    <property type="evidence" value="ECO:0000318"/>
    <property type="project" value="GO_Central"/>
</dbReference>
<dbReference type="CDD" id="cd07628">
    <property type="entry name" value="BAR_Atg24p"/>
    <property type="match status" value="1"/>
</dbReference>
<dbReference type="CDD" id="cd06863">
    <property type="entry name" value="PX_Atg24p"/>
    <property type="match status" value="1"/>
</dbReference>
<dbReference type="FunFam" id="3.30.1520.10:FF:000049">
    <property type="entry name" value="Vacuolar sorting protein VPS1"/>
    <property type="match status" value="1"/>
</dbReference>
<dbReference type="FunFam" id="1.20.1270.60:FF:000042">
    <property type="entry name" value="Vacuolar targeting protein Atg24"/>
    <property type="match status" value="1"/>
</dbReference>
<dbReference type="Gene3D" id="1.20.1270.60">
    <property type="entry name" value="Arfaptin homology (AH) domain/BAR domain"/>
    <property type="match status" value="1"/>
</dbReference>
<dbReference type="Gene3D" id="3.30.1520.10">
    <property type="entry name" value="Phox-like domain"/>
    <property type="match status" value="1"/>
</dbReference>
<dbReference type="InterPro" id="IPR027267">
    <property type="entry name" value="AH/BAR_dom_sf"/>
</dbReference>
<dbReference type="InterPro" id="IPR001683">
    <property type="entry name" value="PX_dom"/>
</dbReference>
<dbReference type="InterPro" id="IPR036871">
    <property type="entry name" value="PX_dom_sf"/>
</dbReference>
<dbReference type="PANTHER" id="PTHR45949">
    <property type="entry name" value="SORTING NEXIN-4"/>
    <property type="match status" value="1"/>
</dbReference>
<dbReference type="PANTHER" id="PTHR45949:SF2">
    <property type="entry name" value="SORTING NEXIN-4"/>
    <property type="match status" value="1"/>
</dbReference>
<dbReference type="Pfam" id="PF00787">
    <property type="entry name" value="PX"/>
    <property type="match status" value="1"/>
</dbReference>
<dbReference type="SMART" id="SM00312">
    <property type="entry name" value="PX"/>
    <property type="match status" value="1"/>
</dbReference>
<dbReference type="SUPFAM" id="SSF64268">
    <property type="entry name" value="PX domain"/>
    <property type="match status" value="1"/>
</dbReference>
<dbReference type="PROSITE" id="PS50195">
    <property type="entry name" value="PX"/>
    <property type="match status" value="1"/>
</dbReference>
<gene>
    <name type="primary">SNX4</name>
    <name type="synonym">ATG24</name>
    <name type="ordered locus">CNC06300</name>
</gene>